<accession>Q1JAJ4</accession>
<sequence>MSERGLLIVFSGPSGVGKGTVRQEIFSTPDHKFEYSVSMTTRPQRPGEVDGVDYFFRTREEFEELIKTGQMLEYAEYVGNYYGTPLTYVNETLDKGIDVFLEIEVQGALQVKSKVPDGVFVFLTPPDLDELEDRLVGRGTDSQEVIAQRIERAKEEIALMREYDYAVVNDEVALAAERVKRIIETEHFRVERVIGRYDKMIKITKNPFKAK</sequence>
<organism>
    <name type="scientific">Streptococcus pyogenes serotype M12 (strain MGAS2096)</name>
    <dbReference type="NCBI Taxonomy" id="370553"/>
    <lineage>
        <taxon>Bacteria</taxon>
        <taxon>Bacillati</taxon>
        <taxon>Bacillota</taxon>
        <taxon>Bacilli</taxon>
        <taxon>Lactobacillales</taxon>
        <taxon>Streptococcaceae</taxon>
        <taxon>Streptococcus</taxon>
    </lineage>
</organism>
<name>KGUA_STRPB</name>
<feature type="chain" id="PRO_0000266413" description="Guanylate kinase">
    <location>
        <begin position="1"/>
        <end position="211"/>
    </location>
</feature>
<feature type="domain" description="Guanylate kinase-like" evidence="1">
    <location>
        <begin position="5"/>
        <end position="184"/>
    </location>
</feature>
<feature type="binding site" evidence="1">
    <location>
        <begin position="12"/>
        <end position="19"/>
    </location>
    <ligand>
        <name>ATP</name>
        <dbReference type="ChEBI" id="CHEBI:30616"/>
    </ligand>
</feature>
<gene>
    <name evidence="1" type="primary">gmk</name>
    <name type="ordered locus">MGAS2096_Spy1362</name>
</gene>
<keyword id="KW-0067">ATP-binding</keyword>
<keyword id="KW-0963">Cytoplasm</keyword>
<keyword id="KW-0418">Kinase</keyword>
<keyword id="KW-0547">Nucleotide-binding</keyword>
<keyword id="KW-0808">Transferase</keyword>
<proteinExistence type="inferred from homology"/>
<comment type="function">
    <text evidence="1">Essential for recycling GMP and indirectly, cGMP.</text>
</comment>
<comment type="catalytic activity">
    <reaction evidence="1">
        <text>GMP + ATP = GDP + ADP</text>
        <dbReference type="Rhea" id="RHEA:20780"/>
        <dbReference type="ChEBI" id="CHEBI:30616"/>
        <dbReference type="ChEBI" id="CHEBI:58115"/>
        <dbReference type="ChEBI" id="CHEBI:58189"/>
        <dbReference type="ChEBI" id="CHEBI:456216"/>
        <dbReference type="EC" id="2.7.4.8"/>
    </reaction>
</comment>
<comment type="subcellular location">
    <subcellularLocation>
        <location evidence="1">Cytoplasm</location>
    </subcellularLocation>
</comment>
<comment type="similarity">
    <text evidence="1">Belongs to the guanylate kinase family.</text>
</comment>
<evidence type="ECO:0000255" key="1">
    <source>
        <dbReference type="HAMAP-Rule" id="MF_00328"/>
    </source>
</evidence>
<dbReference type="EC" id="2.7.4.8" evidence="1"/>
<dbReference type="EMBL" id="CP000261">
    <property type="protein sequence ID" value="ABF36414.1"/>
    <property type="molecule type" value="Genomic_DNA"/>
</dbReference>
<dbReference type="SMR" id="Q1JAJ4"/>
<dbReference type="KEGG" id="spj:MGAS2096_Spy1362"/>
<dbReference type="HOGENOM" id="CLU_001715_1_2_9"/>
<dbReference type="GO" id="GO:0005829">
    <property type="term" value="C:cytosol"/>
    <property type="evidence" value="ECO:0007669"/>
    <property type="project" value="TreeGrafter"/>
</dbReference>
<dbReference type="GO" id="GO:0005524">
    <property type="term" value="F:ATP binding"/>
    <property type="evidence" value="ECO:0007669"/>
    <property type="project" value="UniProtKB-UniRule"/>
</dbReference>
<dbReference type="GO" id="GO:0004385">
    <property type="term" value="F:guanylate kinase activity"/>
    <property type="evidence" value="ECO:0007669"/>
    <property type="project" value="UniProtKB-UniRule"/>
</dbReference>
<dbReference type="CDD" id="cd00071">
    <property type="entry name" value="GMPK"/>
    <property type="match status" value="1"/>
</dbReference>
<dbReference type="FunFam" id="3.40.50.300:FF:000855">
    <property type="entry name" value="Guanylate kinase"/>
    <property type="match status" value="1"/>
</dbReference>
<dbReference type="FunFam" id="3.30.63.10:FF:000002">
    <property type="entry name" value="Guanylate kinase 1"/>
    <property type="match status" value="1"/>
</dbReference>
<dbReference type="Gene3D" id="3.30.63.10">
    <property type="entry name" value="Guanylate Kinase phosphate binding domain"/>
    <property type="match status" value="1"/>
</dbReference>
<dbReference type="Gene3D" id="3.40.50.300">
    <property type="entry name" value="P-loop containing nucleotide triphosphate hydrolases"/>
    <property type="match status" value="2"/>
</dbReference>
<dbReference type="HAMAP" id="MF_00328">
    <property type="entry name" value="Guanylate_kinase"/>
    <property type="match status" value="1"/>
</dbReference>
<dbReference type="InterPro" id="IPR008145">
    <property type="entry name" value="GK/Ca_channel_bsu"/>
</dbReference>
<dbReference type="InterPro" id="IPR008144">
    <property type="entry name" value="Guanylate_kin-like_dom"/>
</dbReference>
<dbReference type="InterPro" id="IPR017665">
    <property type="entry name" value="Guanylate_kinase"/>
</dbReference>
<dbReference type="InterPro" id="IPR020590">
    <property type="entry name" value="Guanylate_kinase_CS"/>
</dbReference>
<dbReference type="InterPro" id="IPR027417">
    <property type="entry name" value="P-loop_NTPase"/>
</dbReference>
<dbReference type="NCBIfam" id="TIGR03263">
    <property type="entry name" value="guanyl_kin"/>
    <property type="match status" value="1"/>
</dbReference>
<dbReference type="PANTHER" id="PTHR23117:SF13">
    <property type="entry name" value="GUANYLATE KINASE"/>
    <property type="match status" value="1"/>
</dbReference>
<dbReference type="PANTHER" id="PTHR23117">
    <property type="entry name" value="GUANYLATE KINASE-RELATED"/>
    <property type="match status" value="1"/>
</dbReference>
<dbReference type="Pfam" id="PF00625">
    <property type="entry name" value="Guanylate_kin"/>
    <property type="match status" value="1"/>
</dbReference>
<dbReference type="SMART" id="SM00072">
    <property type="entry name" value="GuKc"/>
    <property type="match status" value="1"/>
</dbReference>
<dbReference type="SUPFAM" id="SSF52540">
    <property type="entry name" value="P-loop containing nucleoside triphosphate hydrolases"/>
    <property type="match status" value="1"/>
</dbReference>
<dbReference type="PROSITE" id="PS00856">
    <property type="entry name" value="GUANYLATE_KINASE_1"/>
    <property type="match status" value="1"/>
</dbReference>
<dbReference type="PROSITE" id="PS50052">
    <property type="entry name" value="GUANYLATE_KINASE_2"/>
    <property type="match status" value="1"/>
</dbReference>
<reference key="1">
    <citation type="journal article" date="2006" name="Proc. Natl. Acad. Sci. U.S.A.">
        <title>Molecular genetic anatomy of inter- and intraserotype variation in the human bacterial pathogen group A Streptococcus.</title>
        <authorList>
            <person name="Beres S.B."/>
            <person name="Richter E.W."/>
            <person name="Nagiec M.J."/>
            <person name="Sumby P."/>
            <person name="Porcella S.F."/>
            <person name="DeLeo F.R."/>
            <person name="Musser J.M."/>
        </authorList>
    </citation>
    <scope>NUCLEOTIDE SEQUENCE [LARGE SCALE GENOMIC DNA]</scope>
    <source>
        <strain>MGAS2096</strain>
    </source>
</reference>
<protein>
    <recommendedName>
        <fullName evidence="1">Guanylate kinase</fullName>
        <ecNumber evidence="1">2.7.4.8</ecNumber>
    </recommendedName>
    <alternativeName>
        <fullName evidence="1">GMP kinase</fullName>
    </alternativeName>
</protein>